<comment type="similarity">
    <text evidence="1">Belongs to the UPF0297 family.</text>
</comment>
<name>Y520_LIMRJ</name>
<gene>
    <name type="ordered locus">LAR_0520</name>
</gene>
<feature type="chain" id="PRO_1000198237" description="UPF0297 protein LAR_0520">
    <location>
        <begin position="1"/>
        <end position="88"/>
    </location>
</feature>
<proteinExistence type="inferred from homology"/>
<organism>
    <name type="scientific">Limosilactobacillus reuteri subsp. reuteri (strain JCM 1112)</name>
    <name type="common">Lactobacillus reuteri</name>
    <dbReference type="NCBI Taxonomy" id="557433"/>
    <lineage>
        <taxon>Bacteria</taxon>
        <taxon>Bacillati</taxon>
        <taxon>Bacillota</taxon>
        <taxon>Bacilli</taxon>
        <taxon>Lactobacillales</taxon>
        <taxon>Lactobacillaceae</taxon>
        <taxon>Limosilactobacillus</taxon>
    </lineage>
</organism>
<sequence length="88" mass="10354">MATNDKTMFFDFGQERQEDIKQTLKTVYESLEEKGYNPINQIVGYLLSGDPAYIPRLNDARNLIRQHERDEIIEELVRSYLKNNGETK</sequence>
<accession>B2G6F4</accession>
<reference key="1">
    <citation type="journal article" date="2008" name="DNA Res.">
        <title>Comparative genome analysis of Lactobacillus reuteri and Lactobacillus fermentum reveal a genomic island for reuterin and cobalamin production.</title>
        <authorList>
            <person name="Morita H."/>
            <person name="Toh H."/>
            <person name="Fukuda S."/>
            <person name="Horikawa H."/>
            <person name="Oshima K."/>
            <person name="Suzuki T."/>
            <person name="Murakami M."/>
            <person name="Hisamatsu S."/>
            <person name="Kato Y."/>
            <person name="Takizawa T."/>
            <person name="Fukuoka H."/>
            <person name="Yoshimura T."/>
            <person name="Itoh K."/>
            <person name="O'Sullivan D.J."/>
            <person name="McKay L.L."/>
            <person name="Ohno H."/>
            <person name="Kikuchi J."/>
            <person name="Masaoka T."/>
            <person name="Hattori M."/>
        </authorList>
    </citation>
    <scope>NUCLEOTIDE SEQUENCE [LARGE SCALE GENOMIC DNA]</scope>
    <source>
        <strain>JCM 1112</strain>
    </source>
</reference>
<evidence type="ECO:0000255" key="1">
    <source>
        <dbReference type="HAMAP-Rule" id="MF_01507"/>
    </source>
</evidence>
<dbReference type="EMBL" id="AP007281">
    <property type="protein sequence ID" value="BAG25036.1"/>
    <property type="molecule type" value="Genomic_DNA"/>
</dbReference>
<dbReference type="RefSeq" id="WP_003666685.1">
    <property type="nucleotide sequence ID" value="NC_010609.1"/>
</dbReference>
<dbReference type="SMR" id="B2G6F4"/>
<dbReference type="KEGG" id="lrf:LAR_0520"/>
<dbReference type="HOGENOM" id="CLU_162466_0_0_9"/>
<dbReference type="HAMAP" id="MF_01507">
    <property type="entry name" value="UPF0297"/>
    <property type="match status" value="1"/>
</dbReference>
<dbReference type="InterPro" id="IPR009309">
    <property type="entry name" value="IreB"/>
</dbReference>
<dbReference type="NCBIfam" id="NF003997">
    <property type="entry name" value="PRK05473.1"/>
    <property type="match status" value="1"/>
</dbReference>
<dbReference type="PANTHER" id="PTHR40067">
    <property type="entry name" value="UPF0297 PROTEIN YRZL"/>
    <property type="match status" value="1"/>
</dbReference>
<dbReference type="PANTHER" id="PTHR40067:SF1">
    <property type="entry name" value="UPF0297 PROTEIN YRZL"/>
    <property type="match status" value="1"/>
</dbReference>
<dbReference type="Pfam" id="PF06135">
    <property type="entry name" value="IreB"/>
    <property type="match status" value="1"/>
</dbReference>
<dbReference type="PIRSF" id="PIRSF037258">
    <property type="entry name" value="DUF965_bac"/>
    <property type="match status" value="1"/>
</dbReference>
<protein>
    <recommendedName>
        <fullName evidence="1">UPF0297 protein LAR_0520</fullName>
    </recommendedName>
</protein>